<accession>A7GPN5</accession>
<protein>
    <recommendedName>
        <fullName evidence="1">2,3-bisphosphoglycerate-dependent phosphoglycerate mutase</fullName>
        <shortName evidence="1">BPG-dependent PGAM</shortName>
        <shortName evidence="1">PGAM</shortName>
        <shortName evidence="1">Phosphoglyceromutase</shortName>
        <shortName evidence="1">dPGM</shortName>
        <ecNumber evidence="1">5.4.2.11</ecNumber>
    </recommendedName>
</protein>
<keyword id="KW-0312">Gluconeogenesis</keyword>
<keyword id="KW-0324">Glycolysis</keyword>
<keyword id="KW-0413">Isomerase</keyword>
<dbReference type="EC" id="5.4.2.11" evidence="1"/>
<dbReference type="EMBL" id="CP000764">
    <property type="protein sequence ID" value="ABS22093.1"/>
    <property type="molecule type" value="Genomic_DNA"/>
</dbReference>
<dbReference type="RefSeq" id="WP_012094282.1">
    <property type="nucleotide sequence ID" value="NC_009674.1"/>
</dbReference>
<dbReference type="SMR" id="A7GPN5"/>
<dbReference type="STRING" id="315749.Bcer98_1794"/>
<dbReference type="GeneID" id="33897114"/>
<dbReference type="KEGG" id="bcy:Bcer98_1794"/>
<dbReference type="eggNOG" id="COG0588">
    <property type="taxonomic scope" value="Bacteria"/>
</dbReference>
<dbReference type="HOGENOM" id="CLU_033323_1_1_9"/>
<dbReference type="OrthoDB" id="9781415at2"/>
<dbReference type="UniPathway" id="UPA00109">
    <property type="reaction ID" value="UER00186"/>
</dbReference>
<dbReference type="Proteomes" id="UP000002300">
    <property type="component" value="Chromosome"/>
</dbReference>
<dbReference type="GO" id="GO:0004619">
    <property type="term" value="F:phosphoglycerate mutase activity"/>
    <property type="evidence" value="ECO:0007669"/>
    <property type="project" value="UniProtKB-EC"/>
</dbReference>
<dbReference type="GO" id="GO:0006094">
    <property type="term" value="P:gluconeogenesis"/>
    <property type="evidence" value="ECO:0007669"/>
    <property type="project" value="UniProtKB-UniRule"/>
</dbReference>
<dbReference type="GO" id="GO:0006096">
    <property type="term" value="P:glycolytic process"/>
    <property type="evidence" value="ECO:0007669"/>
    <property type="project" value="UniProtKB-UniRule"/>
</dbReference>
<dbReference type="CDD" id="cd07067">
    <property type="entry name" value="HP_PGM_like"/>
    <property type="match status" value="1"/>
</dbReference>
<dbReference type="FunFam" id="3.40.50.1240:FF:000003">
    <property type="entry name" value="2,3-bisphosphoglycerate-dependent phosphoglycerate mutase"/>
    <property type="match status" value="1"/>
</dbReference>
<dbReference type="Gene3D" id="3.40.50.1240">
    <property type="entry name" value="Phosphoglycerate mutase-like"/>
    <property type="match status" value="1"/>
</dbReference>
<dbReference type="HAMAP" id="MF_01039">
    <property type="entry name" value="PGAM_GpmA"/>
    <property type="match status" value="1"/>
</dbReference>
<dbReference type="InterPro" id="IPR013078">
    <property type="entry name" value="His_Pase_superF_clade-1"/>
</dbReference>
<dbReference type="InterPro" id="IPR029033">
    <property type="entry name" value="His_PPase_superfam"/>
</dbReference>
<dbReference type="InterPro" id="IPR001345">
    <property type="entry name" value="PG/BPGM_mutase_AS"/>
</dbReference>
<dbReference type="InterPro" id="IPR005952">
    <property type="entry name" value="Phosphogly_mut1"/>
</dbReference>
<dbReference type="NCBIfam" id="TIGR01258">
    <property type="entry name" value="pgm_1"/>
    <property type="match status" value="1"/>
</dbReference>
<dbReference type="NCBIfam" id="NF010713">
    <property type="entry name" value="PRK14115.1"/>
    <property type="match status" value="1"/>
</dbReference>
<dbReference type="PANTHER" id="PTHR11931">
    <property type="entry name" value="PHOSPHOGLYCERATE MUTASE"/>
    <property type="match status" value="1"/>
</dbReference>
<dbReference type="Pfam" id="PF00300">
    <property type="entry name" value="His_Phos_1"/>
    <property type="match status" value="1"/>
</dbReference>
<dbReference type="PIRSF" id="PIRSF000709">
    <property type="entry name" value="6PFK_2-Ptase"/>
    <property type="match status" value="1"/>
</dbReference>
<dbReference type="SMART" id="SM00855">
    <property type="entry name" value="PGAM"/>
    <property type="match status" value="1"/>
</dbReference>
<dbReference type="SUPFAM" id="SSF53254">
    <property type="entry name" value="Phosphoglycerate mutase-like"/>
    <property type="match status" value="1"/>
</dbReference>
<dbReference type="PROSITE" id="PS00175">
    <property type="entry name" value="PG_MUTASE"/>
    <property type="match status" value="1"/>
</dbReference>
<gene>
    <name evidence="1" type="primary">gpmA</name>
    <name type="ordered locus">Bcer98_1794</name>
</gene>
<organism>
    <name type="scientific">Bacillus cytotoxicus (strain DSM 22905 / CIP 110041 / 391-98 / NVH 391-98)</name>
    <dbReference type="NCBI Taxonomy" id="315749"/>
    <lineage>
        <taxon>Bacteria</taxon>
        <taxon>Bacillati</taxon>
        <taxon>Bacillota</taxon>
        <taxon>Bacilli</taxon>
        <taxon>Bacillales</taxon>
        <taxon>Bacillaceae</taxon>
        <taxon>Bacillus</taxon>
        <taxon>Bacillus cereus group</taxon>
    </lineage>
</organism>
<comment type="function">
    <text evidence="1">Catalyzes the interconversion of 2-phosphoglycerate and 3-phosphoglycerate.</text>
</comment>
<comment type="catalytic activity">
    <reaction evidence="1">
        <text>(2R)-2-phosphoglycerate = (2R)-3-phosphoglycerate</text>
        <dbReference type="Rhea" id="RHEA:15901"/>
        <dbReference type="ChEBI" id="CHEBI:58272"/>
        <dbReference type="ChEBI" id="CHEBI:58289"/>
        <dbReference type="EC" id="5.4.2.11"/>
    </reaction>
</comment>
<comment type="pathway">
    <text evidence="1">Carbohydrate degradation; glycolysis; pyruvate from D-glyceraldehyde 3-phosphate: step 3/5.</text>
</comment>
<comment type="similarity">
    <text evidence="1">Belongs to the phosphoglycerate mutase family. BPG-dependent PGAM subfamily.</text>
</comment>
<sequence length="245" mass="28487">MIKLVLIRHGQSLWNLENRFTGWTDVDLSENGLHEARTAGAILKKNGYTFDVAYTSVLKRAIRTLWIILHEMDLAWVPVHKSWKLNERHYGALQGLNKDETAKKYGEEQVHIWRRSTNVRPPALAEDDPRYEVTDPRYKRLKKGEFPLTECLEDTEKRVLEFWHKEIAPMLCSNQKVIISSHGNTIRSLVKYLDHLSDDGVVSLNIPTGIPLVYELDEHLHPIRHYYLNMDGEVQEGVIPKHISF</sequence>
<name>GPMA_BACCN</name>
<reference key="1">
    <citation type="journal article" date="2008" name="Chem. Biol. Interact.">
        <title>Extending the Bacillus cereus group genomics to putative food-borne pathogens of different toxicity.</title>
        <authorList>
            <person name="Lapidus A."/>
            <person name="Goltsman E."/>
            <person name="Auger S."/>
            <person name="Galleron N."/>
            <person name="Segurens B."/>
            <person name="Dossat C."/>
            <person name="Land M.L."/>
            <person name="Broussolle V."/>
            <person name="Brillard J."/>
            <person name="Guinebretiere M.-H."/>
            <person name="Sanchis V."/>
            <person name="Nguen-the C."/>
            <person name="Lereclus D."/>
            <person name="Richardson P."/>
            <person name="Wincker P."/>
            <person name="Weissenbach J."/>
            <person name="Ehrlich S.D."/>
            <person name="Sorokin A."/>
        </authorList>
    </citation>
    <scope>NUCLEOTIDE SEQUENCE [LARGE SCALE GENOMIC DNA]</scope>
    <source>
        <strain>DSM 22905 / CIP 110041 / 391-98 / NVH 391-98</strain>
    </source>
</reference>
<evidence type="ECO:0000255" key="1">
    <source>
        <dbReference type="HAMAP-Rule" id="MF_01039"/>
    </source>
</evidence>
<proteinExistence type="inferred from homology"/>
<feature type="chain" id="PRO_1000084316" description="2,3-bisphosphoglycerate-dependent phosphoglycerate mutase">
    <location>
        <begin position="1"/>
        <end position="245"/>
    </location>
</feature>
<feature type="active site" description="Tele-phosphohistidine intermediate" evidence="1">
    <location>
        <position position="9"/>
    </location>
</feature>
<feature type="active site" description="Proton donor/acceptor" evidence="1">
    <location>
        <position position="87"/>
    </location>
</feature>
<feature type="binding site" evidence="1">
    <location>
        <begin position="8"/>
        <end position="15"/>
    </location>
    <ligand>
        <name>substrate</name>
    </ligand>
</feature>
<feature type="binding site" evidence="1">
    <location>
        <begin position="21"/>
        <end position="22"/>
    </location>
    <ligand>
        <name>substrate</name>
    </ligand>
</feature>
<feature type="binding site" evidence="1">
    <location>
        <position position="60"/>
    </location>
    <ligand>
        <name>substrate</name>
    </ligand>
</feature>
<feature type="binding site" evidence="1">
    <location>
        <begin position="87"/>
        <end position="90"/>
    </location>
    <ligand>
        <name>substrate</name>
    </ligand>
</feature>
<feature type="binding site" evidence="1">
    <location>
        <position position="98"/>
    </location>
    <ligand>
        <name>substrate</name>
    </ligand>
</feature>
<feature type="binding site" evidence="1">
    <location>
        <begin position="114"/>
        <end position="115"/>
    </location>
    <ligand>
        <name>substrate</name>
    </ligand>
</feature>
<feature type="binding site" evidence="1">
    <location>
        <begin position="183"/>
        <end position="184"/>
    </location>
    <ligand>
        <name>substrate</name>
    </ligand>
</feature>
<feature type="site" description="Transition state stabilizer" evidence="1">
    <location>
        <position position="182"/>
    </location>
</feature>